<proteinExistence type="inferred from homology"/>
<keyword id="KW-0963">Cytoplasm</keyword>
<keyword id="KW-0489">Methyltransferase</keyword>
<keyword id="KW-1185">Reference proteome</keyword>
<keyword id="KW-0949">S-adenosyl-L-methionine</keyword>
<keyword id="KW-0808">Transferase</keyword>
<feature type="chain" id="PRO_0000156142" description="Diphthine methyl ester synthase">
    <location>
        <begin position="1"/>
        <end position="287"/>
    </location>
</feature>
<feature type="binding site" evidence="1">
    <location>
        <position position="9"/>
    </location>
    <ligand>
        <name>S-adenosyl-L-methionine</name>
        <dbReference type="ChEBI" id="CHEBI:59789"/>
    </ligand>
</feature>
<feature type="binding site" evidence="1">
    <location>
        <position position="84"/>
    </location>
    <ligand>
        <name>S-adenosyl-L-methionine</name>
        <dbReference type="ChEBI" id="CHEBI:59789"/>
    </ligand>
</feature>
<feature type="binding site" evidence="1">
    <location>
        <position position="87"/>
    </location>
    <ligand>
        <name>S-adenosyl-L-methionine</name>
        <dbReference type="ChEBI" id="CHEBI:59789"/>
    </ligand>
</feature>
<feature type="binding site" evidence="1">
    <location>
        <begin position="112"/>
        <end position="113"/>
    </location>
    <ligand>
        <name>S-adenosyl-L-methionine</name>
        <dbReference type="ChEBI" id="CHEBI:59789"/>
    </ligand>
</feature>
<feature type="binding site" evidence="1">
    <location>
        <position position="163"/>
    </location>
    <ligand>
        <name>S-adenosyl-L-methionine</name>
        <dbReference type="ChEBI" id="CHEBI:59789"/>
    </ligand>
</feature>
<feature type="binding site" evidence="1">
    <location>
        <position position="221"/>
    </location>
    <ligand>
        <name>S-adenosyl-L-methionine</name>
        <dbReference type="ChEBI" id="CHEBI:59789"/>
    </ligand>
</feature>
<feature type="binding site" evidence="1">
    <location>
        <position position="248"/>
    </location>
    <ligand>
        <name>S-adenosyl-L-methionine</name>
        <dbReference type="ChEBI" id="CHEBI:59789"/>
    </ligand>
</feature>
<organism>
    <name type="scientific">Gibberella zeae (strain ATCC MYA-4620 / CBS 123657 / FGSC 9075 / NRRL 31084 / PH-1)</name>
    <name type="common">Wheat head blight fungus</name>
    <name type="synonym">Fusarium graminearum</name>
    <dbReference type="NCBI Taxonomy" id="229533"/>
    <lineage>
        <taxon>Eukaryota</taxon>
        <taxon>Fungi</taxon>
        <taxon>Dikarya</taxon>
        <taxon>Ascomycota</taxon>
        <taxon>Pezizomycotina</taxon>
        <taxon>Sordariomycetes</taxon>
        <taxon>Hypocreomycetidae</taxon>
        <taxon>Hypocreales</taxon>
        <taxon>Nectriaceae</taxon>
        <taxon>Fusarium</taxon>
    </lineage>
</organism>
<accession>Q4HZI0</accession>
<accession>A0A0E0SCV2</accession>
<accession>V6RP52</accession>
<name>DPH5_GIBZE</name>
<dbReference type="EC" id="2.1.1.314"/>
<dbReference type="EMBL" id="DS231668">
    <property type="protein sequence ID" value="ESU16236.1"/>
    <property type="molecule type" value="Genomic_DNA"/>
</dbReference>
<dbReference type="EMBL" id="HG970335">
    <property type="protein sequence ID" value="CEF84265.1"/>
    <property type="molecule type" value="Genomic_DNA"/>
</dbReference>
<dbReference type="RefSeq" id="XP_011328080.1">
    <property type="nucleotide sequence ID" value="XM_011329778.1"/>
</dbReference>
<dbReference type="SMR" id="Q4HZI0"/>
<dbReference type="FunCoup" id="Q4HZI0">
    <property type="interactions" value="967"/>
</dbReference>
<dbReference type="STRING" id="229533.Q4HZI0"/>
<dbReference type="GeneID" id="23556574"/>
<dbReference type="KEGG" id="fgr:FGSG_09628"/>
<dbReference type="VEuPathDB" id="FungiDB:FGRAMPH1_01G26637"/>
<dbReference type="eggNOG" id="KOG3123">
    <property type="taxonomic scope" value="Eukaryota"/>
</dbReference>
<dbReference type="HOGENOM" id="CLU_066040_1_0_1"/>
<dbReference type="InParanoid" id="Q4HZI0"/>
<dbReference type="OrthoDB" id="16325at110618"/>
<dbReference type="UniPathway" id="UPA00559"/>
<dbReference type="Proteomes" id="UP000070720">
    <property type="component" value="Chromosome 4"/>
</dbReference>
<dbReference type="GO" id="GO:0005737">
    <property type="term" value="C:cytoplasm"/>
    <property type="evidence" value="ECO:0007669"/>
    <property type="project" value="UniProtKB-SubCell"/>
</dbReference>
<dbReference type="GO" id="GO:0141133">
    <property type="term" value="F:diphthine methyl ester synthase activity"/>
    <property type="evidence" value="ECO:0007669"/>
    <property type="project" value="UniProtKB-EC"/>
</dbReference>
<dbReference type="GO" id="GO:0032259">
    <property type="term" value="P:methylation"/>
    <property type="evidence" value="ECO:0007669"/>
    <property type="project" value="UniProtKB-KW"/>
</dbReference>
<dbReference type="GO" id="GO:0017183">
    <property type="term" value="P:protein histidyl modification to diphthamide"/>
    <property type="evidence" value="ECO:0000250"/>
    <property type="project" value="UniProtKB"/>
</dbReference>
<dbReference type="CDD" id="cd11647">
    <property type="entry name" value="DHP5_DphB"/>
    <property type="match status" value="1"/>
</dbReference>
<dbReference type="FunFam" id="3.30.950.10:FF:000004">
    <property type="entry name" value="Diphthine synthase putative"/>
    <property type="match status" value="1"/>
</dbReference>
<dbReference type="FunFam" id="3.40.1010.10:FF:000004">
    <property type="entry name" value="Putative diphthine synthase"/>
    <property type="match status" value="1"/>
</dbReference>
<dbReference type="Gene3D" id="3.40.1010.10">
    <property type="entry name" value="Cobalt-precorrin-4 Transmethylase, Domain 1"/>
    <property type="match status" value="1"/>
</dbReference>
<dbReference type="Gene3D" id="3.30.950.10">
    <property type="entry name" value="Methyltransferase, Cobalt-precorrin-4 Transmethylase, Domain 2"/>
    <property type="match status" value="1"/>
</dbReference>
<dbReference type="HAMAP" id="MF_01084">
    <property type="entry name" value="Diphthine_synth"/>
    <property type="match status" value="1"/>
</dbReference>
<dbReference type="InterPro" id="IPR000878">
    <property type="entry name" value="4pyrrol_Mease"/>
</dbReference>
<dbReference type="InterPro" id="IPR035996">
    <property type="entry name" value="4pyrrol_Methylase_sf"/>
</dbReference>
<dbReference type="InterPro" id="IPR014777">
    <property type="entry name" value="4pyrrole_Mease_sub1"/>
</dbReference>
<dbReference type="InterPro" id="IPR014776">
    <property type="entry name" value="4pyrrole_Mease_sub2"/>
</dbReference>
<dbReference type="InterPro" id="IPR004551">
    <property type="entry name" value="Dphthn_synthase"/>
</dbReference>
<dbReference type="NCBIfam" id="TIGR00522">
    <property type="entry name" value="dph5"/>
    <property type="match status" value="1"/>
</dbReference>
<dbReference type="PANTHER" id="PTHR10882:SF0">
    <property type="entry name" value="DIPHTHINE METHYL ESTER SYNTHASE"/>
    <property type="match status" value="1"/>
</dbReference>
<dbReference type="PANTHER" id="PTHR10882">
    <property type="entry name" value="DIPHTHINE SYNTHASE"/>
    <property type="match status" value="1"/>
</dbReference>
<dbReference type="Pfam" id="PF00590">
    <property type="entry name" value="TP_methylase"/>
    <property type="match status" value="1"/>
</dbReference>
<dbReference type="PIRSF" id="PIRSF036432">
    <property type="entry name" value="Diphthine_synth"/>
    <property type="match status" value="1"/>
</dbReference>
<dbReference type="SUPFAM" id="SSF53790">
    <property type="entry name" value="Tetrapyrrole methylase"/>
    <property type="match status" value="1"/>
</dbReference>
<comment type="function">
    <text evidence="2">S-adenosyl-L-methionine-dependent methyltransferase that catalyzes four methylations of the modified target histidine residue in translation elongation factor 2 (EF-2), to form an intermediate called diphthine methyl ester. The four successive methylation reactions represent the second step of diphthamide biosynthesis.</text>
</comment>
<comment type="catalytic activity">
    <reaction evidence="2">
        <text>2-[(3S)-amino-3-carboxypropyl]-L-histidyl-[translation elongation factor 2] + 4 S-adenosyl-L-methionine = diphthine methyl ester-[translation elongation factor 2] + 4 S-adenosyl-L-homocysteine + 3 H(+)</text>
        <dbReference type="Rhea" id="RHEA:42652"/>
        <dbReference type="Rhea" id="RHEA-COMP:9749"/>
        <dbReference type="Rhea" id="RHEA-COMP:10173"/>
        <dbReference type="ChEBI" id="CHEBI:15378"/>
        <dbReference type="ChEBI" id="CHEBI:57856"/>
        <dbReference type="ChEBI" id="CHEBI:59789"/>
        <dbReference type="ChEBI" id="CHEBI:73995"/>
        <dbReference type="ChEBI" id="CHEBI:79005"/>
        <dbReference type="EC" id="2.1.1.314"/>
    </reaction>
</comment>
<comment type="pathway">
    <text>Protein modification; peptidyl-diphthamide biosynthesis.</text>
</comment>
<comment type="subcellular location">
    <subcellularLocation>
        <location evidence="1">Cytoplasm</location>
    </subcellularLocation>
</comment>
<comment type="similarity">
    <text evidence="3">Belongs to the diphthine synthase family.</text>
</comment>
<gene>
    <name type="primary">DPH5</name>
    <name type="ORF">FGRRES_09628</name>
    <name type="ORF">FGSG_09628</name>
</gene>
<reference key="1">
    <citation type="journal article" date="2007" name="Science">
        <title>The Fusarium graminearum genome reveals a link between localized polymorphism and pathogen specialization.</title>
        <authorList>
            <person name="Cuomo C.A."/>
            <person name="Gueldener U."/>
            <person name="Xu J.-R."/>
            <person name="Trail F."/>
            <person name="Turgeon B.G."/>
            <person name="Di Pietro A."/>
            <person name="Walton J.D."/>
            <person name="Ma L.-J."/>
            <person name="Baker S.E."/>
            <person name="Rep M."/>
            <person name="Adam G."/>
            <person name="Antoniw J."/>
            <person name="Baldwin T."/>
            <person name="Calvo S.E."/>
            <person name="Chang Y.-L."/>
            <person name="DeCaprio D."/>
            <person name="Gale L.R."/>
            <person name="Gnerre S."/>
            <person name="Goswami R.S."/>
            <person name="Hammond-Kosack K."/>
            <person name="Harris L.J."/>
            <person name="Hilburn K."/>
            <person name="Kennell J.C."/>
            <person name="Kroken S."/>
            <person name="Magnuson J.K."/>
            <person name="Mannhaupt G."/>
            <person name="Mauceli E.W."/>
            <person name="Mewes H.-W."/>
            <person name="Mitterbauer R."/>
            <person name="Muehlbauer G."/>
            <person name="Muensterkoetter M."/>
            <person name="Nelson D."/>
            <person name="O'Donnell K."/>
            <person name="Ouellet T."/>
            <person name="Qi W."/>
            <person name="Quesneville H."/>
            <person name="Roncero M.I.G."/>
            <person name="Seong K.-Y."/>
            <person name="Tetko I.V."/>
            <person name="Urban M."/>
            <person name="Waalwijk C."/>
            <person name="Ward T.J."/>
            <person name="Yao J."/>
            <person name="Birren B.W."/>
            <person name="Kistler H.C."/>
        </authorList>
    </citation>
    <scope>NUCLEOTIDE SEQUENCE [LARGE SCALE GENOMIC DNA]</scope>
    <source>
        <strain>ATCC MYA-4620 / CBS 123657 / FGSC 9075 / NRRL 31084 / PH-1</strain>
    </source>
</reference>
<reference key="2">
    <citation type="journal article" date="2010" name="Nature">
        <title>Comparative genomics reveals mobile pathogenicity chromosomes in Fusarium.</title>
        <authorList>
            <person name="Ma L.-J."/>
            <person name="van der Does H.C."/>
            <person name="Borkovich K.A."/>
            <person name="Coleman J.J."/>
            <person name="Daboussi M.-J."/>
            <person name="Di Pietro A."/>
            <person name="Dufresne M."/>
            <person name="Freitag M."/>
            <person name="Grabherr M."/>
            <person name="Henrissat B."/>
            <person name="Houterman P.M."/>
            <person name="Kang S."/>
            <person name="Shim W.-B."/>
            <person name="Woloshuk C."/>
            <person name="Xie X."/>
            <person name="Xu J.-R."/>
            <person name="Antoniw J."/>
            <person name="Baker S.E."/>
            <person name="Bluhm B.H."/>
            <person name="Breakspear A."/>
            <person name="Brown D.W."/>
            <person name="Butchko R.A.E."/>
            <person name="Chapman S."/>
            <person name="Coulson R."/>
            <person name="Coutinho P.M."/>
            <person name="Danchin E.G.J."/>
            <person name="Diener A."/>
            <person name="Gale L.R."/>
            <person name="Gardiner D.M."/>
            <person name="Goff S."/>
            <person name="Hammond-Kosack K.E."/>
            <person name="Hilburn K."/>
            <person name="Hua-Van A."/>
            <person name="Jonkers W."/>
            <person name="Kazan K."/>
            <person name="Kodira C.D."/>
            <person name="Koehrsen M."/>
            <person name="Kumar L."/>
            <person name="Lee Y.-H."/>
            <person name="Li L."/>
            <person name="Manners J.M."/>
            <person name="Miranda-Saavedra D."/>
            <person name="Mukherjee M."/>
            <person name="Park G."/>
            <person name="Park J."/>
            <person name="Park S.-Y."/>
            <person name="Proctor R.H."/>
            <person name="Regev A."/>
            <person name="Ruiz-Roldan M.C."/>
            <person name="Sain D."/>
            <person name="Sakthikumar S."/>
            <person name="Sykes S."/>
            <person name="Schwartz D.C."/>
            <person name="Turgeon B.G."/>
            <person name="Wapinski I."/>
            <person name="Yoder O."/>
            <person name="Young S."/>
            <person name="Zeng Q."/>
            <person name="Zhou S."/>
            <person name="Galagan J."/>
            <person name="Cuomo C.A."/>
            <person name="Kistler H.C."/>
            <person name="Rep M."/>
        </authorList>
    </citation>
    <scope>GENOME REANNOTATION</scope>
    <source>
        <strain>ATCC MYA-4620 / CBS 123657 / FGSC 9075 / NRRL 31084 / PH-1</strain>
    </source>
</reference>
<reference key="3">
    <citation type="journal article" date="2015" name="BMC Genomics">
        <title>The completed genome sequence of the pathogenic ascomycete fungus Fusarium graminearum.</title>
        <authorList>
            <person name="King R."/>
            <person name="Urban M."/>
            <person name="Hammond-Kosack M.C.U."/>
            <person name="Hassani-Pak K."/>
            <person name="Hammond-Kosack K.E."/>
        </authorList>
    </citation>
    <scope>NUCLEOTIDE SEQUENCE [LARGE SCALE GENOMIC DNA]</scope>
    <source>
        <strain>ATCC MYA-4620 / CBS 123657 / FGSC 9075 / NRRL 31084 / PH-1</strain>
    </source>
</reference>
<protein>
    <recommendedName>
        <fullName>Diphthine methyl ester synthase</fullName>
        <ecNumber>2.1.1.314</ecNumber>
    </recommendedName>
    <alternativeName>
        <fullName>Diphthamide biosynthesis methyltransferase</fullName>
    </alternativeName>
</protein>
<evidence type="ECO:0000250" key="1"/>
<evidence type="ECO:0000250" key="2">
    <source>
        <dbReference type="UniProtKB" id="P32469"/>
    </source>
</evidence>
<evidence type="ECO:0000305" key="3"/>
<sequence>MLYLVGLGLSDETDITVKGLEVVKKASRVYLEAYTSILLVEQSVLESYYGRSITVADREMVESNSEEILRNAQNEDVAFLVVGDPFGATTHTDLVLRARELEIPVRTVPNASIMSGIGACGLQLYNFGQTVSMVFFTDTWKPASFYDRIKENRQIGLHTLVLVDIKVKEQSLENMARGRLVYEPPRYMTVGQCAQQMLEIEEERKEGVYAKDSLAIGAARVGGRTEKFVAGTLEELCSTDEELGPPLHSLVLLGRRTHELELDYVRQFAVDKEKWDKIWNAEYGKQL</sequence>